<organism>
    <name type="scientific">Bacillus thuringiensis subsp. konkukian (strain 97-27)</name>
    <dbReference type="NCBI Taxonomy" id="281309"/>
    <lineage>
        <taxon>Bacteria</taxon>
        <taxon>Bacillati</taxon>
        <taxon>Bacillota</taxon>
        <taxon>Bacilli</taxon>
        <taxon>Bacillales</taxon>
        <taxon>Bacillaceae</taxon>
        <taxon>Bacillus</taxon>
        <taxon>Bacillus cereus group</taxon>
    </lineage>
</organism>
<dbReference type="EMBL" id="AE017355">
    <property type="protein sequence ID" value="AAT62022.1"/>
    <property type="molecule type" value="Genomic_DNA"/>
</dbReference>
<dbReference type="RefSeq" id="WP_001293465.1">
    <property type="nucleotide sequence ID" value="NC_005957.1"/>
</dbReference>
<dbReference type="RefSeq" id="YP_035247.1">
    <property type="nucleotide sequence ID" value="NC_005957.1"/>
</dbReference>
<dbReference type="SMR" id="Q6HMH4"/>
<dbReference type="KEGG" id="btk:BT9727_0908"/>
<dbReference type="PATRIC" id="fig|281309.8.peg.956"/>
<dbReference type="HOGENOM" id="CLU_135567_3_0_9"/>
<dbReference type="Proteomes" id="UP000001301">
    <property type="component" value="Chromosome"/>
</dbReference>
<dbReference type="Gene3D" id="1.10.1470.10">
    <property type="entry name" value="YjbJ"/>
    <property type="match status" value="1"/>
</dbReference>
<dbReference type="InterPro" id="IPR008462">
    <property type="entry name" value="CsbD"/>
</dbReference>
<dbReference type="InterPro" id="IPR050423">
    <property type="entry name" value="UPF0337_stress_rsp"/>
</dbReference>
<dbReference type="InterPro" id="IPR036629">
    <property type="entry name" value="YjbJ_sf"/>
</dbReference>
<dbReference type="PANTHER" id="PTHR34977">
    <property type="entry name" value="UPF0337 PROTEIN YJBJ"/>
    <property type="match status" value="1"/>
</dbReference>
<dbReference type="PANTHER" id="PTHR34977:SF1">
    <property type="entry name" value="UPF0337 PROTEIN YJBJ"/>
    <property type="match status" value="1"/>
</dbReference>
<dbReference type="Pfam" id="PF05532">
    <property type="entry name" value="CsbD"/>
    <property type="match status" value="1"/>
</dbReference>
<dbReference type="SUPFAM" id="SSF69047">
    <property type="entry name" value="Hypothetical protein YjbJ"/>
    <property type="match status" value="1"/>
</dbReference>
<feature type="chain" id="PRO_0000209985" description="UPF0337 protein BT9727_0908">
    <location>
        <begin position="1"/>
        <end position="66"/>
    </location>
</feature>
<feature type="region of interest" description="Disordered" evidence="1">
    <location>
        <begin position="1"/>
        <end position="22"/>
    </location>
</feature>
<feature type="compositionally biased region" description="Basic and acidic residues" evidence="1">
    <location>
        <begin position="13"/>
        <end position="22"/>
    </location>
</feature>
<accession>Q6HMH4</accession>
<reference key="1">
    <citation type="journal article" date="2006" name="J. Bacteriol.">
        <title>Pathogenomic sequence analysis of Bacillus cereus and Bacillus thuringiensis isolates closely related to Bacillus anthracis.</title>
        <authorList>
            <person name="Han C.S."/>
            <person name="Xie G."/>
            <person name="Challacombe J.F."/>
            <person name="Altherr M.R."/>
            <person name="Bhotika S.S."/>
            <person name="Bruce D."/>
            <person name="Campbell C.S."/>
            <person name="Campbell M.L."/>
            <person name="Chen J."/>
            <person name="Chertkov O."/>
            <person name="Cleland C."/>
            <person name="Dimitrijevic M."/>
            <person name="Doggett N.A."/>
            <person name="Fawcett J.J."/>
            <person name="Glavina T."/>
            <person name="Goodwin L.A."/>
            <person name="Hill K.K."/>
            <person name="Hitchcock P."/>
            <person name="Jackson P.J."/>
            <person name="Keim P."/>
            <person name="Kewalramani A.R."/>
            <person name="Longmire J."/>
            <person name="Lucas S."/>
            <person name="Malfatti S."/>
            <person name="McMurry K."/>
            <person name="Meincke L.J."/>
            <person name="Misra M."/>
            <person name="Moseman B.L."/>
            <person name="Mundt M."/>
            <person name="Munk A.C."/>
            <person name="Okinaka R.T."/>
            <person name="Parson-Quintana B."/>
            <person name="Reilly L.P."/>
            <person name="Richardson P."/>
            <person name="Robinson D.L."/>
            <person name="Rubin E."/>
            <person name="Saunders E."/>
            <person name="Tapia R."/>
            <person name="Tesmer J.G."/>
            <person name="Thayer N."/>
            <person name="Thompson L.S."/>
            <person name="Tice H."/>
            <person name="Ticknor L.O."/>
            <person name="Wills P.L."/>
            <person name="Brettin T.S."/>
            <person name="Gilna P."/>
        </authorList>
    </citation>
    <scope>NUCLEOTIDE SEQUENCE [LARGE SCALE GENOMIC DNA]</scope>
    <source>
        <strain>97-27</strain>
    </source>
</reference>
<name>Y908_BACHK</name>
<protein>
    <recommendedName>
        <fullName>UPF0337 protein BT9727_0908</fullName>
    </recommendedName>
</protein>
<evidence type="ECO:0000256" key="1">
    <source>
        <dbReference type="SAM" id="MobiDB-lite"/>
    </source>
</evidence>
<evidence type="ECO:0000305" key="2"/>
<gene>
    <name type="ordered locus">BT9727_0908</name>
</gene>
<comment type="similarity">
    <text evidence="2">Belongs to the UPF0337 (CsbD) family.</text>
</comment>
<sequence>MSENGLKEQITGKVEKTKGQVKEGIGEVTEDRKLKNEGKWDKTKGTIKEKVGKVKQKISDGLDNKE</sequence>
<proteinExistence type="inferred from homology"/>